<comment type="function">
    <text evidence="1">Modulates transcription in response to changes in cellular NADH/NAD(+) redox state.</text>
</comment>
<comment type="subunit">
    <text evidence="1">Homodimer.</text>
</comment>
<comment type="subcellular location">
    <subcellularLocation>
        <location evidence="1">Cytoplasm</location>
    </subcellularLocation>
</comment>
<comment type="similarity">
    <text evidence="1">Belongs to the transcriptional regulatory Rex family.</text>
</comment>
<proteinExistence type="inferred from homology"/>
<feature type="chain" id="PRO_1000213640" description="Redox-sensing transcriptional repressor Rex">
    <location>
        <begin position="1"/>
        <end position="215"/>
    </location>
</feature>
<feature type="DNA-binding region" description="H-T-H motif" evidence="1">
    <location>
        <begin position="18"/>
        <end position="57"/>
    </location>
</feature>
<feature type="binding site" evidence="1">
    <location>
        <begin position="92"/>
        <end position="97"/>
    </location>
    <ligand>
        <name>NAD(+)</name>
        <dbReference type="ChEBI" id="CHEBI:57540"/>
    </ligand>
</feature>
<organism>
    <name type="scientific">Listeria monocytogenes serotype 4b (strain CLIP80459)</name>
    <dbReference type="NCBI Taxonomy" id="568819"/>
    <lineage>
        <taxon>Bacteria</taxon>
        <taxon>Bacillati</taxon>
        <taxon>Bacillota</taxon>
        <taxon>Bacilli</taxon>
        <taxon>Bacillales</taxon>
        <taxon>Listeriaceae</taxon>
        <taxon>Listeria</taxon>
    </lineage>
</organism>
<name>REX_LISMC</name>
<gene>
    <name evidence="1" type="primary">rex</name>
    <name type="ordered locus">Lm4b_02093</name>
</gene>
<evidence type="ECO:0000255" key="1">
    <source>
        <dbReference type="HAMAP-Rule" id="MF_01131"/>
    </source>
</evidence>
<sequence>MMEETTKIPQATAKRLPLYHRYLKYLDESGKERVSSAELSEAVKVDSATIRRDFSYFGALGKKGYGYNVSYILDFFSKTLSQDKQTNVALIGVGNLGTALLHYNFMKNNNIKIVAAFDVDPAKVGSVQQDIPIYHLNDMEEIVRENGVEVVILTVPADEAQVTVDRLIEADVKGILNFTPARISVPKQVRVHHIDLTTELQTLIYFLENYPAKTE</sequence>
<reference key="1">
    <citation type="journal article" date="2012" name="BMC Genomics">
        <title>Comparative genomics and transcriptomics of lineages I, II, and III strains of Listeria monocytogenes.</title>
        <authorList>
            <person name="Hain T."/>
            <person name="Ghai R."/>
            <person name="Billion A."/>
            <person name="Kuenne C.T."/>
            <person name="Steinweg C."/>
            <person name="Izar B."/>
            <person name="Mohamed W."/>
            <person name="Mraheil M."/>
            <person name="Domann E."/>
            <person name="Schaffrath S."/>
            <person name="Karst U."/>
            <person name="Goesmann A."/>
            <person name="Oehm S."/>
            <person name="Puhler A."/>
            <person name="Merkl R."/>
            <person name="Vorwerk S."/>
            <person name="Glaser P."/>
            <person name="Garrido P."/>
            <person name="Rusniok C."/>
            <person name="Buchrieser C."/>
            <person name="Goebel W."/>
            <person name="Chakraborty T."/>
        </authorList>
    </citation>
    <scope>NUCLEOTIDE SEQUENCE [LARGE SCALE GENOMIC DNA]</scope>
    <source>
        <strain>CLIP80459</strain>
    </source>
</reference>
<dbReference type="EMBL" id="FM242711">
    <property type="protein sequence ID" value="CAS05852.1"/>
    <property type="molecule type" value="Genomic_DNA"/>
</dbReference>
<dbReference type="RefSeq" id="WP_003722329.1">
    <property type="nucleotide sequence ID" value="NC_012488.1"/>
</dbReference>
<dbReference type="SMR" id="C1KX25"/>
<dbReference type="KEGG" id="lmc:Lm4b_02093"/>
<dbReference type="HOGENOM" id="CLU_061534_1_1_9"/>
<dbReference type="GO" id="GO:0005737">
    <property type="term" value="C:cytoplasm"/>
    <property type="evidence" value="ECO:0007669"/>
    <property type="project" value="UniProtKB-SubCell"/>
</dbReference>
<dbReference type="GO" id="GO:0003677">
    <property type="term" value="F:DNA binding"/>
    <property type="evidence" value="ECO:0007669"/>
    <property type="project" value="UniProtKB-UniRule"/>
</dbReference>
<dbReference type="GO" id="GO:0003700">
    <property type="term" value="F:DNA-binding transcription factor activity"/>
    <property type="evidence" value="ECO:0007669"/>
    <property type="project" value="UniProtKB-UniRule"/>
</dbReference>
<dbReference type="GO" id="GO:0045892">
    <property type="term" value="P:negative regulation of DNA-templated transcription"/>
    <property type="evidence" value="ECO:0007669"/>
    <property type="project" value="InterPro"/>
</dbReference>
<dbReference type="GO" id="GO:0051775">
    <property type="term" value="P:response to redox state"/>
    <property type="evidence" value="ECO:0007669"/>
    <property type="project" value="InterPro"/>
</dbReference>
<dbReference type="Gene3D" id="3.40.50.720">
    <property type="entry name" value="NAD(P)-binding Rossmann-like Domain"/>
    <property type="match status" value="1"/>
</dbReference>
<dbReference type="Gene3D" id="1.10.10.10">
    <property type="entry name" value="Winged helix-like DNA-binding domain superfamily/Winged helix DNA-binding domain"/>
    <property type="match status" value="1"/>
</dbReference>
<dbReference type="HAMAP" id="MF_01131">
    <property type="entry name" value="Rex"/>
    <property type="match status" value="1"/>
</dbReference>
<dbReference type="InterPro" id="IPR003781">
    <property type="entry name" value="CoA-bd"/>
</dbReference>
<dbReference type="InterPro" id="IPR036291">
    <property type="entry name" value="NAD(P)-bd_dom_sf"/>
</dbReference>
<dbReference type="InterPro" id="IPR009718">
    <property type="entry name" value="Rex_DNA-bd_C_dom"/>
</dbReference>
<dbReference type="InterPro" id="IPR022876">
    <property type="entry name" value="Tscrpt_rep_Rex"/>
</dbReference>
<dbReference type="InterPro" id="IPR036388">
    <property type="entry name" value="WH-like_DNA-bd_sf"/>
</dbReference>
<dbReference type="InterPro" id="IPR036390">
    <property type="entry name" value="WH_DNA-bd_sf"/>
</dbReference>
<dbReference type="NCBIfam" id="NF003989">
    <property type="entry name" value="PRK05472.1-3"/>
    <property type="match status" value="1"/>
</dbReference>
<dbReference type="NCBIfam" id="NF003991">
    <property type="entry name" value="PRK05472.1-5"/>
    <property type="match status" value="1"/>
</dbReference>
<dbReference type="NCBIfam" id="NF003994">
    <property type="entry name" value="PRK05472.2-3"/>
    <property type="match status" value="1"/>
</dbReference>
<dbReference type="NCBIfam" id="NF003995">
    <property type="entry name" value="PRK05472.2-4"/>
    <property type="match status" value="1"/>
</dbReference>
<dbReference type="NCBIfam" id="NF003996">
    <property type="entry name" value="PRK05472.2-5"/>
    <property type="match status" value="1"/>
</dbReference>
<dbReference type="PANTHER" id="PTHR35786">
    <property type="entry name" value="REDOX-SENSING TRANSCRIPTIONAL REPRESSOR REX"/>
    <property type="match status" value="1"/>
</dbReference>
<dbReference type="PANTHER" id="PTHR35786:SF1">
    <property type="entry name" value="REDOX-SENSING TRANSCRIPTIONAL REPRESSOR REX 1"/>
    <property type="match status" value="1"/>
</dbReference>
<dbReference type="Pfam" id="PF02629">
    <property type="entry name" value="CoA_binding"/>
    <property type="match status" value="1"/>
</dbReference>
<dbReference type="Pfam" id="PF06971">
    <property type="entry name" value="Put_DNA-bind_N"/>
    <property type="match status" value="1"/>
</dbReference>
<dbReference type="SMART" id="SM00881">
    <property type="entry name" value="CoA_binding"/>
    <property type="match status" value="1"/>
</dbReference>
<dbReference type="SUPFAM" id="SSF51735">
    <property type="entry name" value="NAD(P)-binding Rossmann-fold domains"/>
    <property type="match status" value="1"/>
</dbReference>
<dbReference type="SUPFAM" id="SSF46785">
    <property type="entry name" value="Winged helix' DNA-binding domain"/>
    <property type="match status" value="1"/>
</dbReference>
<keyword id="KW-0963">Cytoplasm</keyword>
<keyword id="KW-0238">DNA-binding</keyword>
<keyword id="KW-0520">NAD</keyword>
<keyword id="KW-0678">Repressor</keyword>
<keyword id="KW-0804">Transcription</keyword>
<keyword id="KW-0805">Transcription regulation</keyword>
<protein>
    <recommendedName>
        <fullName evidence="1">Redox-sensing transcriptional repressor Rex</fullName>
    </recommendedName>
</protein>
<accession>C1KX25</accession>